<proteinExistence type="inferred from homology"/>
<gene>
    <name type="primary">hil-6</name>
    <name type="ORF">F59A7.4</name>
</gene>
<dbReference type="EMBL" id="BX284605">
    <property type="protein sequence ID" value="CCD72097.1"/>
    <property type="molecule type" value="Genomic_DNA"/>
</dbReference>
<dbReference type="PIR" id="A88961">
    <property type="entry name" value="A88961"/>
</dbReference>
<dbReference type="RefSeq" id="NP_503554.1">
    <property type="nucleotide sequence ID" value="NM_071153.4"/>
</dbReference>
<dbReference type="SMR" id="O16277"/>
<dbReference type="BioGRID" id="51320">
    <property type="interactions" value="1"/>
</dbReference>
<dbReference type="FunCoup" id="O16277">
    <property type="interactions" value="299"/>
</dbReference>
<dbReference type="STRING" id="6239.F59A7.4.1"/>
<dbReference type="PaxDb" id="6239-F59A7.4"/>
<dbReference type="PeptideAtlas" id="O16277"/>
<dbReference type="EnsemblMetazoa" id="F59A7.4.1">
    <property type="protein sequence ID" value="F59A7.4.1"/>
    <property type="gene ID" value="WBGene00001857"/>
</dbReference>
<dbReference type="GeneID" id="186584"/>
<dbReference type="KEGG" id="cel:CELE_F59A7.4"/>
<dbReference type="UCSC" id="F59A7.4">
    <property type="organism name" value="c. elegans"/>
</dbReference>
<dbReference type="AGR" id="WB:WBGene00001857"/>
<dbReference type="CTD" id="186584"/>
<dbReference type="WormBase" id="F59A7.4">
    <property type="protein sequence ID" value="CE11442"/>
    <property type="gene ID" value="WBGene00001857"/>
    <property type="gene designation" value="hil-6"/>
</dbReference>
<dbReference type="eggNOG" id="KOG4012">
    <property type="taxonomic scope" value="Eukaryota"/>
</dbReference>
<dbReference type="GeneTree" id="ENSGT00970000195980"/>
<dbReference type="HOGENOM" id="CLU_052897_1_1_1"/>
<dbReference type="InParanoid" id="O16277"/>
<dbReference type="OMA" id="DTHQESC"/>
<dbReference type="OrthoDB" id="1110759at2759"/>
<dbReference type="PRO" id="PR:O16277"/>
<dbReference type="Proteomes" id="UP000001940">
    <property type="component" value="Chromosome V"/>
</dbReference>
<dbReference type="Bgee" id="WBGene00001857">
    <property type="expression patterns" value="Expressed in germ line (C elegans) and 4 other cell types or tissues"/>
</dbReference>
<dbReference type="GO" id="GO:0000786">
    <property type="term" value="C:nucleosome"/>
    <property type="evidence" value="ECO:0007669"/>
    <property type="project" value="InterPro"/>
</dbReference>
<dbReference type="GO" id="GO:0005634">
    <property type="term" value="C:nucleus"/>
    <property type="evidence" value="ECO:0000318"/>
    <property type="project" value="GO_Central"/>
</dbReference>
<dbReference type="GO" id="GO:0003690">
    <property type="term" value="F:double-stranded DNA binding"/>
    <property type="evidence" value="ECO:0000318"/>
    <property type="project" value="GO_Central"/>
</dbReference>
<dbReference type="GO" id="GO:0031492">
    <property type="term" value="F:nucleosomal DNA binding"/>
    <property type="evidence" value="ECO:0000318"/>
    <property type="project" value="GO_Central"/>
</dbReference>
<dbReference type="GO" id="GO:0030527">
    <property type="term" value="F:structural constituent of chromatin"/>
    <property type="evidence" value="ECO:0007669"/>
    <property type="project" value="InterPro"/>
</dbReference>
<dbReference type="GO" id="GO:0030261">
    <property type="term" value="P:chromosome condensation"/>
    <property type="evidence" value="ECO:0000318"/>
    <property type="project" value="GO_Central"/>
</dbReference>
<dbReference type="GO" id="GO:0045910">
    <property type="term" value="P:negative regulation of DNA recombination"/>
    <property type="evidence" value="ECO:0000318"/>
    <property type="project" value="GO_Central"/>
</dbReference>
<dbReference type="GO" id="GO:0006334">
    <property type="term" value="P:nucleosome assembly"/>
    <property type="evidence" value="ECO:0007669"/>
    <property type="project" value="InterPro"/>
</dbReference>
<dbReference type="CDD" id="cd00073">
    <property type="entry name" value="H15"/>
    <property type="match status" value="1"/>
</dbReference>
<dbReference type="FunFam" id="1.10.10.10:FF:000140">
    <property type="entry name" value="Histone H1.0"/>
    <property type="match status" value="1"/>
</dbReference>
<dbReference type="Gene3D" id="1.10.10.10">
    <property type="entry name" value="Winged helix-like DNA-binding domain superfamily/Winged helix DNA-binding domain"/>
    <property type="match status" value="1"/>
</dbReference>
<dbReference type="InterPro" id="IPR005819">
    <property type="entry name" value="H1/H5"/>
</dbReference>
<dbReference type="InterPro" id="IPR005818">
    <property type="entry name" value="Histone_H1/H5_H15"/>
</dbReference>
<dbReference type="InterPro" id="IPR036388">
    <property type="entry name" value="WH-like_DNA-bd_sf"/>
</dbReference>
<dbReference type="InterPro" id="IPR036390">
    <property type="entry name" value="WH_DNA-bd_sf"/>
</dbReference>
<dbReference type="PANTHER" id="PTHR11467:SF36">
    <property type="entry name" value="HISTONE 24-RELATED"/>
    <property type="match status" value="1"/>
</dbReference>
<dbReference type="PANTHER" id="PTHR11467">
    <property type="entry name" value="HISTONE H1"/>
    <property type="match status" value="1"/>
</dbReference>
<dbReference type="Pfam" id="PF00538">
    <property type="entry name" value="Linker_histone"/>
    <property type="match status" value="1"/>
</dbReference>
<dbReference type="PRINTS" id="PR00624">
    <property type="entry name" value="HISTONEH5"/>
</dbReference>
<dbReference type="SMART" id="SM00526">
    <property type="entry name" value="H15"/>
    <property type="match status" value="1"/>
</dbReference>
<dbReference type="SUPFAM" id="SSF46785">
    <property type="entry name" value="Winged helix' DNA-binding domain"/>
    <property type="match status" value="1"/>
</dbReference>
<dbReference type="PROSITE" id="PS51504">
    <property type="entry name" value="H15"/>
    <property type="match status" value="1"/>
</dbReference>
<feature type="initiator methionine" description="Removed" evidence="2">
    <location>
        <position position="1"/>
    </location>
</feature>
<feature type="chain" id="PRO_0000195986" description="Putative histone H1.6">
    <location>
        <begin position="2"/>
        <end position="190"/>
    </location>
</feature>
<feature type="domain" description="H15" evidence="3">
    <location>
        <begin position="34"/>
        <end position="110"/>
    </location>
</feature>
<feature type="region of interest" description="Disordered" evidence="4">
    <location>
        <begin position="1"/>
        <end position="29"/>
    </location>
</feature>
<feature type="region of interest" description="Disordered" evidence="4">
    <location>
        <begin position="141"/>
        <end position="190"/>
    </location>
</feature>
<feature type="compositionally biased region" description="Low complexity" evidence="4">
    <location>
        <begin position="9"/>
        <end position="29"/>
    </location>
</feature>
<feature type="compositionally biased region" description="Basic residues" evidence="4">
    <location>
        <begin position="148"/>
        <end position="183"/>
    </location>
</feature>
<feature type="modified residue" description="N-acetylserine" evidence="2">
    <location>
        <position position="2"/>
    </location>
</feature>
<accession>O16277</accession>
<reference key="1">
    <citation type="journal article" date="1998" name="Science">
        <title>Genome sequence of the nematode C. elegans: a platform for investigating biology.</title>
        <authorList>
            <consortium name="The C. elegans sequencing consortium"/>
        </authorList>
    </citation>
    <scope>NUCLEOTIDE SEQUENCE [LARGE SCALE GENOMIC DNA]</scope>
    <source>
        <strain>Bristol N2</strain>
    </source>
</reference>
<reference key="2">
    <citation type="journal article" date="2001" name="Development">
        <title>A single histone H1 isoform (H1.1) is essential for chromatin silencing and germline development in Caenorhabditis elegans.</title>
        <authorList>
            <person name="Jedrusik M.A."/>
            <person name="Schulze E."/>
        </authorList>
    </citation>
    <scope>DISCUSSION</scope>
</reference>
<keyword id="KW-0007">Acetylation</keyword>
<keyword id="KW-0158">Chromosome</keyword>
<keyword id="KW-0238">DNA-binding</keyword>
<keyword id="KW-0539">Nucleus</keyword>
<keyword id="KW-1185">Reference proteome</keyword>
<name>H16_CAEEL</name>
<protein>
    <recommendedName>
        <fullName>Putative histone H1.6</fullName>
    </recommendedName>
    <alternativeName>
        <fullName>Histone H1-like protein 6</fullName>
    </alternativeName>
</protein>
<organism>
    <name type="scientific">Caenorhabditis elegans</name>
    <dbReference type="NCBI Taxonomy" id="6239"/>
    <lineage>
        <taxon>Eukaryota</taxon>
        <taxon>Metazoa</taxon>
        <taxon>Ecdysozoa</taxon>
        <taxon>Nematoda</taxon>
        <taxon>Chromadorea</taxon>
        <taxon>Rhabditida</taxon>
        <taxon>Rhabditina</taxon>
        <taxon>Rhabditomorpha</taxon>
        <taxon>Rhabditoidea</taxon>
        <taxon>Rhabditidae</taxon>
        <taxon>Peloderinae</taxon>
        <taxon>Caenorhabditis</taxon>
    </lineage>
</organism>
<comment type="function">
    <text evidence="1">Histones H1 are necessary for the condensation of nucleosome chains into higher-order structures.</text>
</comment>
<comment type="subcellular location">
    <subcellularLocation>
        <location evidence="3">Nucleus</location>
    </subcellularLocation>
    <subcellularLocation>
        <location evidence="3">Chromosome</location>
    </subcellularLocation>
</comment>
<comment type="similarity">
    <text evidence="3">Belongs to the histone H1/H5 family.</text>
</comment>
<comment type="caution">
    <text evidence="5">PubMed:11245572 has not been able to detect expression of this protein.</text>
</comment>
<sequence length="190" mass="19747">MSDVAVAETPAVKTPTKAPKANATKVPKVKTAAAHPPFINMVTAAISSLKERKGSSKIAILKYITANYKLGDQVKKINSNLRSALKKGVASKALVQTVGTGATGRFRVAEKTAATAKKPTVKKAATGEKVKKTVVKKTVAKKTGDKVKKAKSPKKIAKPAAKKATKSPSKKVAPKKAAAKPAKKTAALKA</sequence>
<evidence type="ECO:0000250" key="1"/>
<evidence type="ECO:0000250" key="2">
    <source>
        <dbReference type="UniProtKB" id="P10771"/>
    </source>
</evidence>
<evidence type="ECO:0000255" key="3">
    <source>
        <dbReference type="PROSITE-ProRule" id="PRU00837"/>
    </source>
</evidence>
<evidence type="ECO:0000256" key="4">
    <source>
        <dbReference type="SAM" id="MobiDB-lite"/>
    </source>
</evidence>
<evidence type="ECO:0000305" key="5"/>